<organism>
    <name type="scientific">Saccharomyces cerevisiae (strain ATCC 204508 / S288c)</name>
    <name type="common">Baker's yeast</name>
    <dbReference type="NCBI Taxonomy" id="559292"/>
    <lineage>
        <taxon>Eukaryota</taxon>
        <taxon>Fungi</taxon>
        <taxon>Dikarya</taxon>
        <taxon>Ascomycota</taxon>
        <taxon>Saccharomycotina</taxon>
        <taxon>Saccharomycetes</taxon>
        <taxon>Saccharomycetales</taxon>
        <taxon>Saccharomycetaceae</taxon>
        <taxon>Saccharomyces</taxon>
    </lineage>
</organism>
<sequence>MGPKRQTVSLQEKKNRILNFFQETYTFYNIKELEKSIPKKCGISPMIVKDLVQQMIDEDGVISVEKCGNINIYWCFKNQTLQKLYDSSELIKKKIQEVKCDIATYKQELDKTLATGRRKKFTVGQKSYNREALLEKRKKIQDEIKKKSNSLQKIESIRWDAAKIQENKQQIRLKKVHLEKTTDNIEILIDYLYKKFFLKPEQIRKEFGIPEEFKEFTEV</sequence>
<comment type="function">
    <text evidence="2 3 4 5">Required for proper homologous chromosome pairing and efficient cross-over and intragenic recombination during meiosis. Stimulates DMC1-dependent homologous strand assimilation, which is required for the resolution of meiotic double-strand breaks.</text>
</comment>
<comment type="subunit">
    <text>Heterodimer with HOP2. MND1-HOP2 binds preferentially to dsDNA.</text>
</comment>
<comment type="subcellular location">
    <subcellularLocation>
        <location evidence="2 4">Nucleus</location>
    </subcellularLocation>
</comment>
<comment type="similarity">
    <text evidence="6">Belongs to the MND1 family.</text>
</comment>
<comment type="sequence caution" evidence="6">
    <conflict type="erroneous gene model prediction">
        <sequence resource="EMBL-CDS" id="CAA62791"/>
    </conflict>
</comment>
<comment type="sequence caution" evidence="6">
    <conflict type="erroneous gene model prediction">
        <sequence resource="EMBL-CDS" id="CAA96895"/>
    </conflict>
</comment>
<name>MND1_YEAST</name>
<accession>P53102</accession>
<accession>D6VTX1</accession>
<proteinExistence type="evidence at protein level"/>
<keyword id="KW-0175">Coiled coil</keyword>
<keyword id="KW-0903">Direct protein sequencing</keyword>
<keyword id="KW-0233">DNA recombination</keyword>
<keyword id="KW-0238">DNA-binding</keyword>
<keyword id="KW-0469">Meiosis</keyword>
<keyword id="KW-0539">Nucleus</keyword>
<keyword id="KW-1185">Reference proteome</keyword>
<dbReference type="EMBL" id="X91489">
    <property type="protein sequence ID" value="CAA62791.1"/>
    <property type="status" value="ALT_SEQ"/>
    <property type="molecule type" value="Genomic_DNA"/>
</dbReference>
<dbReference type="EMBL" id="Z72704">
    <property type="status" value="NOT_ANNOTATED_CDS"/>
    <property type="molecule type" value="Genomic_DNA"/>
</dbReference>
<dbReference type="EMBL" id="Z72705">
    <property type="protein sequence ID" value="CAA96895.1"/>
    <property type="status" value="ALT_SEQ"/>
    <property type="molecule type" value="Genomic_DNA"/>
</dbReference>
<dbReference type="EMBL" id="AY558488">
    <property type="protein sequence ID" value="AAS56814.1"/>
    <property type="molecule type" value="Genomic_DNA"/>
</dbReference>
<dbReference type="EMBL" id="BK006941">
    <property type="protein sequence ID" value="DAA07932.1"/>
    <property type="molecule type" value="Genomic_DNA"/>
</dbReference>
<dbReference type="PIR" id="S61134">
    <property type="entry name" value="S61134"/>
</dbReference>
<dbReference type="RefSeq" id="NP_011332.2">
    <property type="nucleotide sequence ID" value="NM_001181048.1"/>
</dbReference>
<dbReference type="SMR" id="P53102"/>
<dbReference type="BioGRID" id="33072">
    <property type="interactions" value="32"/>
</dbReference>
<dbReference type="ComplexPortal" id="CPX-1644">
    <property type="entry name" value="HOP2-MND1 recombination assembly factor complex"/>
</dbReference>
<dbReference type="DIP" id="DIP-2673N"/>
<dbReference type="FunCoup" id="P53102">
    <property type="interactions" value="259"/>
</dbReference>
<dbReference type="IntAct" id="P53102">
    <property type="interactions" value="2"/>
</dbReference>
<dbReference type="MINT" id="P53102"/>
<dbReference type="STRING" id="4932.YGL183C"/>
<dbReference type="iPTMnet" id="P53102"/>
<dbReference type="PaxDb" id="4932-YGL183C"/>
<dbReference type="PeptideAtlas" id="P53102"/>
<dbReference type="TopDownProteomics" id="P53102"/>
<dbReference type="EnsemblFungi" id="YGL183C_mRNA">
    <property type="protein sequence ID" value="YGL183C"/>
    <property type="gene ID" value="YGL183C"/>
</dbReference>
<dbReference type="GeneID" id="852692"/>
<dbReference type="KEGG" id="sce:YGL183C"/>
<dbReference type="AGR" id="SGD:S000003151"/>
<dbReference type="SGD" id="S000003151">
    <property type="gene designation" value="MND1"/>
</dbReference>
<dbReference type="VEuPathDB" id="FungiDB:YGL183C"/>
<dbReference type="eggNOG" id="KOG3433">
    <property type="taxonomic scope" value="Eukaryota"/>
</dbReference>
<dbReference type="GeneTree" id="ENSGT00490000043413"/>
<dbReference type="HOGENOM" id="CLU_080628_2_0_1"/>
<dbReference type="InParanoid" id="P53102"/>
<dbReference type="OMA" id="VCYWAFP"/>
<dbReference type="OrthoDB" id="9978204at2759"/>
<dbReference type="BioCyc" id="YEAST:G3O-30669-MONOMER"/>
<dbReference type="BioGRID-ORCS" id="852692">
    <property type="hits" value="1 hit in 10 CRISPR screens"/>
</dbReference>
<dbReference type="PRO" id="PR:P53102"/>
<dbReference type="Proteomes" id="UP000002311">
    <property type="component" value="Chromosome VII"/>
</dbReference>
<dbReference type="RNAct" id="P53102">
    <property type="molecule type" value="protein"/>
</dbReference>
<dbReference type="GO" id="GO:0000794">
    <property type="term" value="C:condensed nuclear chromosome"/>
    <property type="evidence" value="ECO:0000314"/>
    <property type="project" value="SGD"/>
</dbReference>
<dbReference type="GO" id="GO:0120231">
    <property type="term" value="C:DNA recombinase auxiliary factor complex"/>
    <property type="evidence" value="ECO:0000318"/>
    <property type="project" value="GO_Central"/>
</dbReference>
<dbReference type="GO" id="GO:0005634">
    <property type="term" value="C:nucleus"/>
    <property type="evidence" value="ECO:0007005"/>
    <property type="project" value="SGD"/>
</dbReference>
<dbReference type="GO" id="GO:0003690">
    <property type="term" value="F:double-stranded DNA binding"/>
    <property type="evidence" value="ECO:0000314"/>
    <property type="project" value="SGD"/>
</dbReference>
<dbReference type="GO" id="GO:0120230">
    <property type="term" value="F:recombinase activator activity"/>
    <property type="evidence" value="ECO:0000318"/>
    <property type="project" value="GO_Central"/>
</dbReference>
<dbReference type="GO" id="GO:0007129">
    <property type="term" value="P:homologous chromosome pairing at meiosis"/>
    <property type="evidence" value="ECO:0000314"/>
    <property type="project" value="ComplexPortal"/>
</dbReference>
<dbReference type="GO" id="GO:0000709">
    <property type="term" value="P:meiotic joint molecule formation"/>
    <property type="evidence" value="ECO:0000318"/>
    <property type="project" value="GO_Central"/>
</dbReference>
<dbReference type="GO" id="GO:0010774">
    <property type="term" value="P:meiotic strand invasion involved in reciprocal meiotic recombination"/>
    <property type="evidence" value="ECO:0000318"/>
    <property type="project" value="GO_Central"/>
</dbReference>
<dbReference type="GO" id="GO:0007131">
    <property type="term" value="P:reciprocal meiotic recombination"/>
    <property type="evidence" value="ECO:0000314"/>
    <property type="project" value="ComplexPortal"/>
</dbReference>
<dbReference type="InterPro" id="IPR040661">
    <property type="entry name" value="LZ3wCH"/>
</dbReference>
<dbReference type="InterPro" id="IPR005647">
    <property type="entry name" value="Mnd1"/>
</dbReference>
<dbReference type="InterPro" id="IPR040453">
    <property type="entry name" value="Mnd1_HTH"/>
</dbReference>
<dbReference type="PANTHER" id="PTHR15938:SF1">
    <property type="entry name" value="MEIOTIC NUCLEAR DIVISION PROTEIN 1"/>
    <property type="match status" value="1"/>
</dbReference>
<dbReference type="PANTHER" id="PTHR15938">
    <property type="entry name" value="TBP-1 INTERACTING PROTEIN"/>
    <property type="match status" value="1"/>
</dbReference>
<dbReference type="Pfam" id="PF18517">
    <property type="entry name" value="LZ3wCH"/>
    <property type="match status" value="1"/>
</dbReference>
<dbReference type="Pfam" id="PF03962">
    <property type="entry name" value="Mnd1"/>
    <property type="match status" value="1"/>
</dbReference>
<dbReference type="PIRSF" id="PIRSF026991">
    <property type="entry name" value="Mnd1"/>
    <property type="match status" value="1"/>
</dbReference>
<feature type="chain" id="PRO_0000096522" description="Meiotic nuclear division protein 1">
    <location>
        <begin position="1"/>
        <end position="219"/>
    </location>
</feature>
<feature type="coiled-coil region" evidence="1">
    <location>
        <begin position="88"/>
        <end position="181"/>
    </location>
</feature>
<gene>
    <name type="primary">MND1</name>
    <name type="ordered locus">YGL183C</name>
    <name type="ORF">G1604</name>
</gene>
<reference key="1">
    <citation type="journal article" date="1997" name="Yeast">
        <title>Sequencing of a 40.5 kb fragment located on the left arm of chromosome VII from Saccharomyces cerevisiae.</title>
        <authorList>
            <person name="Coglievina M."/>
            <person name="Klima R."/>
            <person name="Bertani I."/>
            <person name="Delneri D."/>
            <person name="Zaccaria P."/>
            <person name="Bruschi C.V."/>
        </authorList>
    </citation>
    <scope>NUCLEOTIDE SEQUENCE [GENOMIC DNA]</scope>
    <source>
        <strain>ATCC 96604 / S288c / FY1679</strain>
    </source>
</reference>
<reference key="2">
    <citation type="journal article" date="1997" name="Nature">
        <title>The nucleotide sequence of Saccharomyces cerevisiae chromosome VII.</title>
        <authorList>
            <person name="Tettelin H."/>
            <person name="Agostoni-Carbone M.L."/>
            <person name="Albermann K."/>
            <person name="Albers M."/>
            <person name="Arroyo J."/>
            <person name="Backes U."/>
            <person name="Barreiros T."/>
            <person name="Bertani I."/>
            <person name="Bjourson A.J."/>
            <person name="Brueckner M."/>
            <person name="Bruschi C.V."/>
            <person name="Carignani G."/>
            <person name="Castagnoli L."/>
            <person name="Cerdan E."/>
            <person name="Clemente M.L."/>
            <person name="Coblenz A."/>
            <person name="Coglievina M."/>
            <person name="Coissac E."/>
            <person name="Defoor E."/>
            <person name="Del Bino S."/>
            <person name="Delius H."/>
            <person name="Delneri D."/>
            <person name="de Wergifosse P."/>
            <person name="Dujon B."/>
            <person name="Durand P."/>
            <person name="Entian K.-D."/>
            <person name="Eraso P."/>
            <person name="Escribano V."/>
            <person name="Fabiani L."/>
            <person name="Fartmann B."/>
            <person name="Feroli F."/>
            <person name="Feuermann M."/>
            <person name="Frontali L."/>
            <person name="Garcia-Gonzalez M."/>
            <person name="Garcia-Saez M.I."/>
            <person name="Goffeau A."/>
            <person name="Guerreiro P."/>
            <person name="Hani J."/>
            <person name="Hansen M."/>
            <person name="Hebling U."/>
            <person name="Hernandez K."/>
            <person name="Heumann K."/>
            <person name="Hilger F."/>
            <person name="Hofmann B."/>
            <person name="Indge K.J."/>
            <person name="James C.M."/>
            <person name="Klima R."/>
            <person name="Koetter P."/>
            <person name="Kramer B."/>
            <person name="Kramer W."/>
            <person name="Lauquin G."/>
            <person name="Leuther H."/>
            <person name="Louis E.J."/>
            <person name="Maillier E."/>
            <person name="Marconi A."/>
            <person name="Martegani E."/>
            <person name="Mazon M.J."/>
            <person name="Mazzoni C."/>
            <person name="McReynolds A.D.K."/>
            <person name="Melchioretto P."/>
            <person name="Mewes H.-W."/>
            <person name="Minenkova O."/>
            <person name="Mueller-Auer S."/>
            <person name="Nawrocki A."/>
            <person name="Netter P."/>
            <person name="Neu R."/>
            <person name="Nombela C."/>
            <person name="Oliver S.G."/>
            <person name="Panzeri L."/>
            <person name="Paoluzi S."/>
            <person name="Plevani P."/>
            <person name="Portetelle D."/>
            <person name="Portillo F."/>
            <person name="Potier S."/>
            <person name="Purnelle B."/>
            <person name="Rieger M."/>
            <person name="Riles L."/>
            <person name="Rinaldi T."/>
            <person name="Robben J."/>
            <person name="Rodrigues-Pousada C."/>
            <person name="Rodriguez-Belmonte E."/>
            <person name="Rodriguez-Torres A.M."/>
            <person name="Rose M."/>
            <person name="Ruzzi M."/>
            <person name="Saliola M."/>
            <person name="Sanchez-Perez M."/>
            <person name="Schaefer B."/>
            <person name="Schaefer M."/>
            <person name="Scharfe M."/>
            <person name="Schmidheini T."/>
            <person name="Schreer A."/>
            <person name="Skala J."/>
            <person name="Souciet J.-L."/>
            <person name="Steensma H.Y."/>
            <person name="Talla E."/>
            <person name="Thierry A."/>
            <person name="Vandenbol M."/>
            <person name="van der Aart Q.J.M."/>
            <person name="Van Dyck L."/>
            <person name="Vanoni M."/>
            <person name="Verhasselt P."/>
            <person name="Voet M."/>
            <person name="Volckaert G."/>
            <person name="Wambutt R."/>
            <person name="Watson M.D."/>
            <person name="Weber N."/>
            <person name="Wedler E."/>
            <person name="Wedler H."/>
            <person name="Wipfli P."/>
            <person name="Wolf K."/>
            <person name="Wright L.F."/>
            <person name="Zaccaria P."/>
            <person name="Zimmermann M."/>
            <person name="Zollner A."/>
            <person name="Kleine K."/>
        </authorList>
    </citation>
    <scope>NUCLEOTIDE SEQUENCE [LARGE SCALE GENOMIC DNA]</scope>
    <source>
        <strain>ATCC 204508 / S288c</strain>
    </source>
</reference>
<reference key="3">
    <citation type="journal article" date="2014" name="G3 (Bethesda)">
        <title>The reference genome sequence of Saccharomyces cerevisiae: Then and now.</title>
        <authorList>
            <person name="Engel S.R."/>
            <person name="Dietrich F.S."/>
            <person name="Fisk D.G."/>
            <person name="Binkley G."/>
            <person name="Balakrishnan R."/>
            <person name="Costanzo M.C."/>
            <person name="Dwight S.S."/>
            <person name="Hitz B.C."/>
            <person name="Karra K."/>
            <person name="Nash R.S."/>
            <person name="Weng S."/>
            <person name="Wong E.D."/>
            <person name="Lloyd P."/>
            <person name="Skrzypek M.S."/>
            <person name="Miyasato S.R."/>
            <person name="Simison M."/>
            <person name="Cherry J.M."/>
        </authorList>
    </citation>
    <scope>GENOME REANNOTATION</scope>
    <source>
        <strain>ATCC 204508 / S288c</strain>
    </source>
</reference>
<reference key="4">
    <citation type="journal article" date="2004" name="Proc. Natl. Acad. Sci. U.S.A.">
        <title>Heterodimeric complexes of Hop2 and Mnd1 function with Dmc1 to promote meiotic homolog juxtaposition and strand assimilation.</title>
        <authorList>
            <person name="Chen Y.-K."/>
            <person name="Leng C.-H."/>
            <person name="Olivares H."/>
            <person name="Lee M.-H."/>
            <person name="Chang Y.-C."/>
            <person name="Kung W.-M."/>
            <person name="Ti S.-C."/>
            <person name="Lo Y.-H."/>
            <person name="Wang A.H.-J."/>
            <person name="Chang C.-S."/>
            <person name="Bishop D.K."/>
            <person name="Hsueh Y.-P."/>
            <person name="Wang T.-F."/>
        </authorList>
    </citation>
    <scope>PROTEIN SEQUENCE OF 1-5</scope>
    <scope>FUNCTION</scope>
    <scope>INTERACTION WITH HOP2</scope>
    <scope>DNA-BINDING</scope>
</reference>
<reference key="5">
    <citation type="journal article" date="2007" name="Genome Res.">
        <title>Approaching a complete repository of sequence-verified protein-encoding clones for Saccharomyces cerevisiae.</title>
        <authorList>
            <person name="Hu Y."/>
            <person name="Rolfs A."/>
            <person name="Bhullar B."/>
            <person name="Murthy T.V.S."/>
            <person name="Zhu C."/>
            <person name="Berger M.F."/>
            <person name="Camargo A.A."/>
            <person name="Kelley F."/>
            <person name="McCarron S."/>
            <person name="Jepson D."/>
            <person name="Richardson A."/>
            <person name="Raphael J."/>
            <person name="Moreira D."/>
            <person name="Taycher E."/>
            <person name="Zuo D."/>
            <person name="Mohr S."/>
            <person name="Kane M.F."/>
            <person name="Williamson J."/>
            <person name="Simpson A.J.G."/>
            <person name="Bulyk M.L."/>
            <person name="Harlow E."/>
            <person name="Marsischky G."/>
            <person name="Kolodner R.D."/>
            <person name="LaBaer J."/>
        </authorList>
    </citation>
    <scope>NUCLEOTIDE SEQUENCE [GENOMIC DNA] OF 46-219</scope>
    <source>
        <strain>ATCC 204508 / S288c</strain>
    </source>
</reference>
<reference key="6">
    <citation type="journal article" date="2002" name="Mol. Cell. Biol.">
        <title>The Mnd1 protein forms a complex with Hop2 to promote homologous chromosome pairing and meiotic double-strand break repair.</title>
        <authorList>
            <person name="Tsubouchi H."/>
            <person name="Roeder G.S."/>
        </authorList>
    </citation>
    <scope>REVISION OF GENE MODEL</scope>
    <scope>FUNCTION</scope>
    <scope>INTERACTION WITH HOP2</scope>
    <scope>SUBCELLULAR LOCATION</scope>
</reference>
<reference key="7">
    <citation type="journal article" date="2002" name="Proc. Natl. Acad. Sci. U.S.A.">
        <title>Mnd1p: an evolutionarily conserved protein required for meiotic recombination.</title>
        <authorList>
            <person name="Gerton J.L."/>
            <person name="DeRisi J.L."/>
        </authorList>
    </citation>
    <scope>REVISION OF GENE MODEL</scope>
    <scope>FUNCTION</scope>
</reference>
<reference key="8">
    <citation type="journal article" date="2004" name="Curr. Biol.">
        <title>Mnd1 is required for meiotic interhomolog repair.</title>
        <authorList>
            <person name="Zierhut C."/>
            <person name="Berlinger M."/>
            <person name="Rupp C."/>
            <person name="Shinohara A."/>
            <person name="Klein F."/>
        </authorList>
    </citation>
    <scope>FUNCTION</scope>
    <scope>SUBCELLULAR LOCATION</scope>
</reference>
<evidence type="ECO:0000255" key="1"/>
<evidence type="ECO:0000269" key="2">
    <source>
    </source>
</evidence>
<evidence type="ECO:0000269" key="3">
    <source>
    </source>
</evidence>
<evidence type="ECO:0000269" key="4">
    <source>
    </source>
</evidence>
<evidence type="ECO:0000269" key="5">
    <source>
    </source>
</evidence>
<evidence type="ECO:0000305" key="6"/>
<protein>
    <recommendedName>
        <fullName>Meiotic nuclear division protein 1</fullName>
    </recommendedName>
</protein>